<reference key="1">
    <citation type="journal article" date="2001" name="Curr. Biol.">
        <title>Analysis of an essential requirement for the poly(A) binding protein function using cross-species complementation.</title>
        <authorList>
            <person name="Chekanova J.A."/>
            <person name="Shaw R.J."/>
            <person name="Belostotsky D.A."/>
        </authorList>
    </citation>
    <scope>NUCLEOTIDE SEQUENCE [MRNA]</scope>
    <scope>FUNCTION</scope>
    <source>
        <strain>cv. Columbia</strain>
    </source>
</reference>
<reference key="2">
    <citation type="journal article" date="1997" name="FEBS Lett.">
        <title>Sequence analysis of a 24-kb contiguous genomic region at the Arabidopsis thaliana PFL locus on chromosome 1.</title>
        <authorList>
            <person name="Terryn N."/>
            <person name="Neyt P."/>
            <person name="de Clercq R."/>
            <person name="de Keyser A."/>
            <person name="van den Daele H."/>
            <person name="Ardiles W."/>
            <person name="Dehais P."/>
            <person name="Rouze P."/>
            <person name="Gielen J."/>
            <person name="Villarroel R."/>
            <person name="van Montagu M."/>
        </authorList>
    </citation>
    <scope>NUCLEOTIDE SEQUENCE [LARGE SCALE GENOMIC DNA]</scope>
    <source>
        <strain>cv. Columbia</strain>
    </source>
</reference>
<reference key="3">
    <citation type="journal article" date="2000" name="Nature">
        <title>Sequence and analysis of chromosome 1 of the plant Arabidopsis thaliana.</title>
        <authorList>
            <person name="Theologis A."/>
            <person name="Ecker J.R."/>
            <person name="Palm C.J."/>
            <person name="Federspiel N.A."/>
            <person name="Kaul S."/>
            <person name="White O."/>
            <person name="Alonso J."/>
            <person name="Altafi H."/>
            <person name="Araujo R."/>
            <person name="Bowman C.L."/>
            <person name="Brooks S.Y."/>
            <person name="Buehler E."/>
            <person name="Chan A."/>
            <person name="Chao Q."/>
            <person name="Chen H."/>
            <person name="Cheuk R.F."/>
            <person name="Chin C.W."/>
            <person name="Chung M.K."/>
            <person name="Conn L."/>
            <person name="Conway A.B."/>
            <person name="Conway A.R."/>
            <person name="Creasy T.H."/>
            <person name="Dewar K."/>
            <person name="Dunn P."/>
            <person name="Etgu P."/>
            <person name="Feldblyum T.V."/>
            <person name="Feng J.-D."/>
            <person name="Fong B."/>
            <person name="Fujii C.Y."/>
            <person name="Gill J.E."/>
            <person name="Goldsmith A.D."/>
            <person name="Haas B."/>
            <person name="Hansen N.F."/>
            <person name="Hughes B."/>
            <person name="Huizar L."/>
            <person name="Hunter J.L."/>
            <person name="Jenkins J."/>
            <person name="Johnson-Hopson C."/>
            <person name="Khan S."/>
            <person name="Khaykin E."/>
            <person name="Kim C.J."/>
            <person name="Koo H.L."/>
            <person name="Kremenetskaia I."/>
            <person name="Kurtz D.B."/>
            <person name="Kwan A."/>
            <person name="Lam B."/>
            <person name="Langin-Hooper S."/>
            <person name="Lee A."/>
            <person name="Lee J.M."/>
            <person name="Lenz C.A."/>
            <person name="Li J.H."/>
            <person name="Li Y.-P."/>
            <person name="Lin X."/>
            <person name="Liu S.X."/>
            <person name="Liu Z.A."/>
            <person name="Luros J.S."/>
            <person name="Maiti R."/>
            <person name="Marziali A."/>
            <person name="Militscher J."/>
            <person name="Miranda M."/>
            <person name="Nguyen M."/>
            <person name="Nierman W.C."/>
            <person name="Osborne B.I."/>
            <person name="Pai G."/>
            <person name="Peterson J."/>
            <person name="Pham P.K."/>
            <person name="Rizzo M."/>
            <person name="Rooney T."/>
            <person name="Rowley D."/>
            <person name="Sakano H."/>
            <person name="Salzberg S.L."/>
            <person name="Schwartz J.R."/>
            <person name="Shinn P."/>
            <person name="Southwick A.M."/>
            <person name="Sun H."/>
            <person name="Tallon L.J."/>
            <person name="Tambunga G."/>
            <person name="Toriumi M.J."/>
            <person name="Town C.D."/>
            <person name="Utterback T."/>
            <person name="Van Aken S."/>
            <person name="Vaysberg M."/>
            <person name="Vysotskaia V.S."/>
            <person name="Walker M."/>
            <person name="Wu D."/>
            <person name="Yu G."/>
            <person name="Fraser C.M."/>
            <person name="Venter J.C."/>
            <person name="Davis R.W."/>
        </authorList>
    </citation>
    <scope>NUCLEOTIDE SEQUENCE [LARGE SCALE GENOMIC DNA]</scope>
    <source>
        <strain>cv. Columbia</strain>
    </source>
</reference>
<reference key="4">
    <citation type="journal article" date="2017" name="Plant J.">
        <title>Araport11: a complete reannotation of the Arabidopsis thaliana reference genome.</title>
        <authorList>
            <person name="Cheng C.Y."/>
            <person name="Krishnakumar V."/>
            <person name="Chan A.P."/>
            <person name="Thibaud-Nissen F."/>
            <person name="Schobel S."/>
            <person name="Town C.D."/>
        </authorList>
    </citation>
    <scope>GENOME REANNOTATION</scope>
    <source>
        <strain>cv. Columbia</strain>
    </source>
</reference>
<reference key="5">
    <citation type="journal article" date="2003" name="Science">
        <title>Empirical analysis of transcriptional activity in the Arabidopsis genome.</title>
        <authorList>
            <person name="Yamada K."/>
            <person name="Lim J."/>
            <person name="Dale J.M."/>
            <person name="Chen H."/>
            <person name="Shinn P."/>
            <person name="Palm C.J."/>
            <person name="Southwick A.M."/>
            <person name="Wu H.C."/>
            <person name="Kim C.J."/>
            <person name="Nguyen M."/>
            <person name="Pham P.K."/>
            <person name="Cheuk R.F."/>
            <person name="Karlin-Newmann G."/>
            <person name="Liu S.X."/>
            <person name="Lam B."/>
            <person name="Sakano H."/>
            <person name="Wu T."/>
            <person name="Yu G."/>
            <person name="Miranda M."/>
            <person name="Quach H.L."/>
            <person name="Tripp M."/>
            <person name="Chang C.H."/>
            <person name="Lee J.M."/>
            <person name="Toriumi M.J."/>
            <person name="Chan M.M."/>
            <person name="Tang C.C."/>
            <person name="Onodera C.S."/>
            <person name="Deng J.M."/>
            <person name="Akiyama K."/>
            <person name="Ansari Y."/>
            <person name="Arakawa T."/>
            <person name="Banh J."/>
            <person name="Banno F."/>
            <person name="Bowser L."/>
            <person name="Brooks S.Y."/>
            <person name="Carninci P."/>
            <person name="Chao Q."/>
            <person name="Choy N."/>
            <person name="Enju A."/>
            <person name="Goldsmith A.D."/>
            <person name="Gurjal M."/>
            <person name="Hansen N.F."/>
            <person name="Hayashizaki Y."/>
            <person name="Johnson-Hopson C."/>
            <person name="Hsuan V.W."/>
            <person name="Iida K."/>
            <person name="Karnes M."/>
            <person name="Khan S."/>
            <person name="Koesema E."/>
            <person name="Ishida J."/>
            <person name="Jiang P.X."/>
            <person name="Jones T."/>
            <person name="Kawai J."/>
            <person name="Kamiya A."/>
            <person name="Meyers C."/>
            <person name="Nakajima M."/>
            <person name="Narusaka M."/>
            <person name="Seki M."/>
            <person name="Sakurai T."/>
            <person name="Satou M."/>
            <person name="Tamse R."/>
            <person name="Vaysberg M."/>
            <person name="Wallender E.K."/>
            <person name="Wong C."/>
            <person name="Yamamura Y."/>
            <person name="Yuan S."/>
            <person name="Shinozaki K."/>
            <person name="Davis R.W."/>
            <person name="Theologis A."/>
            <person name="Ecker J.R."/>
        </authorList>
    </citation>
    <scope>NUCLEOTIDE SEQUENCE [LARGE SCALE MRNA]</scope>
    <source>
        <strain>cv. Columbia</strain>
    </source>
</reference>
<reference key="6">
    <citation type="journal article" date="1993" name="Proc. Natl. Acad. Sci. U.S.A.">
        <title>Differential organ-specific expression of three poly(A)-binding-protein genes from Arabidopsis thaliana.</title>
        <authorList>
            <person name="Belostotsky D.A."/>
            <person name="Meagher R.B."/>
        </authorList>
    </citation>
    <scope>TISSUE SPECIFICITY</scope>
</reference>
<reference key="7">
    <citation type="journal article" date="2000" name="J. Biol. Chem.">
        <title>Poly(A) tail-dependent exonuclease AtRrp41p from Arabidopsis thaliana rescues 5.8 S rRNA processing and mRNA decay defects of the yeast ski6 mutant and is found in an exosome-sized complex in plant and yeast cells.</title>
        <authorList>
            <person name="Chekanova J.A."/>
            <person name="Shaw R.J."/>
            <person name="Wills M.A."/>
            <person name="Belostotsky D.A."/>
        </authorList>
    </citation>
    <scope>FUNCTION</scope>
</reference>
<reference key="8">
    <citation type="journal article" date="2003" name="Genetics">
        <title>Unexpected complexity of poly(A)-binding protein gene families in flowering plants: three conserved lineages that are at least 200 million years old and possible auto- and cross-regulation.</title>
        <authorList>
            <person name="Belostotsky D.A."/>
        </authorList>
    </citation>
    <scope>GENE FAMILY</scope>
    <scope>TISSUE SPECIFICITY</scope>
    <scope>FUNCTION</scope>
</reference>
<reference key="9">
    <citation type="journal article" date="2003" name="RNA">
        <title>Evidence that poly(A) binding protein has an evolutionarily conserved function in facilitating mRNA biogenesis and export.</title>
        <authorList>
            <person name="Chekanova J.A."/>
            <person name="Belostotsky D.A."/>
        </authorList>
    </citation>
    <scope>FUNCTION</scope>
</reference>
<reference key="10">
    <citation type="journal article" date="2005" name="Mol. Genet. Genomics">
        <title>Four distinct classes of proteins as interaction partners of the PABC domain of Arabidopsis thaliana Poly(A)-binding proteins.</title>
        <authorList>
            <person name="Bravo J."/>
            <person name="Aguilar-Henonin L."/>
            <person name="Olmedo G."/>
            <person name="Guzman P."/>
        </authorList>
    </citation>
    <scope>TISSUE SPECIFICITY</scope>
</reference>
<name>PABP3_ARATH</name>
<proteinExistence type="evidence at transcript level"/>
<dbReference type="EMBL" id="AF293840">
    <property type="protein sequence ID" value="AAG02117.1"/>
    <property type="molecule type" value="mRNA"/>
</dbReference>
<dbReference type="EMBL" id="Y12227">
    <property type="protein sequence ID" value="CAA72907.1"/>
    <property type="molecule type" value="Genomic_DNA"/>
</dbReference>
<dbReference type="EMBL" id="AC003979">
    <property type="protein sequence ID" value="AAC25510.1"/>
    <property type="molecule type" value="Genomic_DNA"/>
</dbReference>
<dbReference type="EMBL" id="CP002684">
    <property type="protein sequence ID" value="AEE30284.1"/>
    <property type="molecule type" value="Genomic_DNA"/>
</dbReference>
<dbReference type="EMBL" id="AY054490">
    <property type="protein sequence ID" value="AAK96681.1"/>
    <property type="molecule type" value="mRNA"/>
</dbReference>
<dbReference type="PIR" id="T00768">
    <property type="entry name" value="T00768"/>
</dbReference>
<dbReference type="RefSeq" id="NP_173690.1">
    <property type="nucleotide sequence ID" value="NM_102123.4"/>
</dbReference>
<dbReference type="SMR" id="O64380"/>
<dbReference type="BioGRID" id="24121">
    <property type="interactions" value="8"/>
</dbReference>
<dbReference type="FunCoup" id="O64380">
    <property type="interactions" value="2582"/>
</dbReference>
<dbReference type="STRING" id="3702.O64380"/>
<dbReference type="GlyGen" id="O64380">
    <property type="glycosylation" value="1 site"/>
</dbReference>
<dbReference type="PaxDb" id="3702-AT1G22760.1"/>
<dbReference type="ProteomicsDB" id="236320"/>
<dbReference type="EnsemblPlants" id="AT1G22760.1">
    <property type="protein sequence ID" value="AT1G22760.1"/>
    <property type="gene ID" value="AT1G22760"/>
</dbReference>
<dbReference type="GeneID" id="838882"/>
<dbReference type="Gramene" id="AT1G22760.1">
    <property type="protein sequence ID" value="AT1G22760.1"/>
    <property type="gene ID" value="AT1G22760"/>
</dbReference>
<dbReference type="KEGG" id="ath:AT1G22760"/>
<dbReference type="Araport" id="AT1G22760"/>
<dbReference type="TAIR" id="AT1G22760">
    <property type="gene designation" value="PAB3"/>
</dbReference>
<dbReference type="eggNOG" id="KOG0123">
    <property type="taxonomic scope" value="Eukaryota"/>
</dbReference>
<dbReference type="HOGENOM" id="CLU_012062_22_4_1"/>
<dbReference type="InParanoid" id="O64380"/>
<dbReference type="OMA" id="MVNPQGI"/>
<dbReference type="PhylomeDB" id="O64380"/>
<dbReference type="PRO" id="PR:O64380"/>
<dbReference type="Proteomes" id="UP000006548">
    <property type="component" value="Chromosome 1"/>
</dbReference>
<dbReference type="ExpressionAtlas" id="O64380">
    <property type="expression patterns" value="baseline and differential"/>
</dbReference>
<dbReference type="GO" id="GO:0005737">
    <property type="term" value="C:cytoplasm"/>
    <property type="evidence" value="ECO:0007669"/>
    <property type="project" value="UniProtKB-SubCell"/>
</dbReference>
<dbReference type="GO" id="GO:0005634">
    <property type="term" value="C:nucleus"/>
    <property type="evidence" value="ECO:0007005"/>
    <property type="project" value="TAIR"/>
</dbReference>
<dbReference type="GO" id="GO:0003723">
    <property type="term" value="F:RNA binding"/>
    <property type="evidence" value="ECO:0007669"/>
    <property type="project" value="UniProtKB-KW"/>
</dbReference>
<dbReference type="GO" id="GO:0006397">
    <property type="term" value="P:mRNA processing"/>
    <property type="evidence" value="ECO:0000316"/>
    <property type="project" value="TAIR"/>
</dbReference>
<dbReference type="GO" id="GO:0000184">
    <property type="term" value="P:nuclear-transcribed mRNA catabolic process, nonsense-mediated decay"/>
    <property type="evidence" value="ECO:0007669"/>
    <property type="project" value="UniProtKB-KW"/>
</dbReference>
<dbReference type="GO" id="GO:0060211">
    <property type="term" value="P:regulation of nuclear-transcribed mRNA poly(A) tail shortening"/>
    <property type="evidence" value="ECO:0000314"/>
    <property type="project" value="UniProtKB"/>
</dbReference>
<dbReference type="GO" id="GO:0006417">
    <property type="term" value="P:regulation of translation"/>
    <property type="evidence" value="ECO:0007669"/>
    <property type="project" value="UniProtKB-KW"/>
</dbReference>
<dbReference type="CDD" id="cd12379">
    <property type="entry name" value="RRM2_I_PABPs"/>
    <property type="match status" value="1"/>
</dbReference>
<dbReference type="CDD" id="cd12380">
    <property type="entry name" value="RRM3_I_PABPs"/>
    <property type="match status" value="1"/>
</dbReference>
<dbReference type="CDD" id="cd12381">
    <property type="entry name" value="RRM4_I_PABPs"/>
    <property type="match status" value="1"/>
</dbReference>
<dbReference type="FunFam" id="1.10.1900.10:FF:000003">
    <property type="entry name" value="Polyadenylate-binding protein"/>
    <property type="match status" value="1"/>
</dbReference>
<dbReference type="FunFam" id="3.30.70.330:FF:000285">
    <property type="entry name" value="Polyadenylate-binding protein"/>
    <property type="match status" value="1"/>
</dbReference>
<dbReference type="FunFam" id="3.30.70.330:FF:000648">
    <property type="entry name" value="Polyadenylate-binding protein"/>
    <property type="match status" value="1"/>
</dbReference>
<dbReference type="FunFam" id="3.30.70.330:FF:001206">
    <property type="entry name" value="Polyadenylate-binding protein"/>
    <property type="match status" value="1"/>
</dbReference>
<dbReference type="FunFam" id="3.30.70.330:FF:000590">
    <property type="entry name" value="Polyadenylate-binding protein 5"/>
    <property type="match status" value="1"/>
</dbReference>
<dbReference type="Gene3D" id="3.30.70.330">
    <property type="match status" value="4"/>
</dbReference>
<dbReference type="Gene3D" id="1.10.1900.10">
    <property type="entry name" value="c-terminal domain of poly(a) binding protein"/>
    <property type="match status" value="1"/>
</dbReference>
<dbReference type="InterPro" id="IPR012677">
    <property type="entry name" value="Nucleotide-bd_a/b_plait_sf"/>
</dbReference>
<dbReference type="InterPro" id="IPR036053">
    <property type="entry name" value="PABP-dom"/>
</dbReference>
<dbReference type="InterPro" id="IPR006515">
    <property type="entry name" value="PABP_1234"/>
</dbReference>
<dbReference type="InterPro" id="IPR002004">
    <property type="entry name" value="PABP_HYD_C"/>
</dbReference>
<dbReference type="InterPro" id="IPR035979">
    <property type="entry name" value="RBD_domain_sf"/>
</dbReference>
<dbReference type="InterPro" id="IPR045305">
    <property type="entry name" value="RRM2_I_PABPs"/>
</dbReference>
<dbReference type="InterPro" id="IPR000504">
    <property type="entry name" value="RRM_dom"/>
</dbReference>
<dbReference type="InterPro" id="IPR003954">
    <property type="entry name" value="RRM_dom_euk"/>
</dbReference>
<dbReference type="NCBIfam" id="TIGR01628">
    <property type="entry name" value="PABP-1234"/>
    <property type="match status" value="1"/>
</dbReference>
<dbReference type="PANTHER" id="PTHR24012">
    <property type="entry name" value="RNA BINDING PROTEIN"/>
    <property type="match status" value="1"/>
</dbReference>
<dbReference type="Pfam" id="PF00658">
    <property type="entry name" value="MLLE"/>
    <property type="match status" value="1"/>
</dbReference>
<dbReference type="Pfam" id="PF00076">
    <property type="entry name" value="RRM_1"/>
    <property type="match status" value="4"/>
</dbReference>
<dbReference type="SMART" id="SM00517">
    <property type="entry name" value="PolyA"/>
    <property type="match status" value="1"/>
</dbReference>
<dbReference type="SMART" id="SM00360">
    <property type="entry name" value="RRM"/>
    <property type="match status" value="4"/>
</dbReference>
<dbReference type="SMART" id="SM00361">
    <property type="entry name" value="RRM_1"/>
    <property type="match status" value="3"/>
</dbReference>
<dbReference type="SUPFAM" id="SSF63570">
    <property type="entry name" value="PABC (PABP) domain"/>
    <property type="match status" value="1"/>
</dbReference>
<dbReference type="SUPFAM" id="SSF54928">
    <property type="entry name" value="RNA-binding domain, RBD"/>
    <property type="match status" value="2"/>
</dbReference>
<dbReference type="PROSITE" id="PS51309">
    <property type="entry name" value="PABC"/>
    <property type="match status" value="1"/>
</dbReference>
<dbReference type="PROSITE" id="PS50102">
    <property type="entry name" value="RRM"/>
    <property type="match status" value="4"/>
</dbReference>
<keyword id="KW-0963">Cytoplasm</keyword>
<keyword id="KW-0866">Nonsense-mediated mRNA decay</keyword>
<keyword id="KW-0539">Nucleus</keyword>
<keyword id="KW-1185">Reference proteome</keyword>
<keyword id="KW-0677">Repeat</keyword>
<keyword id="KW-0694">RNA-binding</keyword>
<keyword id="KW-0810">Translation regulation</keyword>
<accession>O64380</accession>
<accession>O80546</accession>
<accession>Q9FYS4</accession>
<evidence type="ECO:0000250" key="1"/>
<evidence type="ECO:0000255" key="2">
    <source>
        <dbReference type="PROSITE-ProRule" id="PRU00176"/>
    </source>
</evidence>
<evidence type="ECO:0000255" key="3">
    <source>
        <dbReference type="PROSITE-ProRule" id="PRU00641"/>
    </source>
</evidence>
<evidence type="ECO:0000269" key="4">
    <source>
    </source>
</evidence>
<evidence type="ECO:0000269" key="5">
    <source>
    </source>
</evidence>
<evidence type="ECO:0000269" key="6">
    <source>
    </source>
</evidence>
<evidence type="ECO:0000269" key="7">
    <source>
    </source>
</evidence>
<evidence type="ECO:0000269" key="8">
    <source>
    </source>
</evidence>
<evidence type="ECO:0000269" key="9">
    <source>
    </source>
</evidence>
<evidence type="ECO:0000305" key="10"/>
<protein>
    <recommendedName>
        <fullName>Polyadenylate-binding protein 3</fullName>
        <shortName>PABP-3</shortName>
        <shortName>Poly(A)-binding protein 3</shortName>
    </recommendedName>
</protein>
<gene>
    <name type="primary">PAB3</name>
    <name type="ordered locus">At1g22760</name>
    <name type="ORF">T22J18.7</name>
</gene>
<feature type="chain" id="PRO_0000081715" description="Polyadenylate-binding protein 3">
    <location>
        <begin position="1"/>
        <end position="660"/>
    </location>
</feature>
<feature type="domain" description="RRM 1" evidence="2">
    <location>
        <begin position="49"/>
        <end position="126"/>
    </location>
</feature>
<feature type="domain" description="RRM 2" evidence="2">
    <location>
        <begin position="136"/>
        <end position="213"/>
    </location>
</feature>
<feature type="domain" description="RRM 3" evidence="2">
    <location>
        <begin position="229"/>
        <end position="306"/>
    </location>
</feature>
<feature type="domain" description="RRM 4" evidence="2">
    <location>
        <begin position="332"/>
        <end position="409"/>
    </location>
</feature>
<feature type="domain" description="PABC" evidence="3">
    <location>
        <begin position="571"/>
        <end position="648"/>
    </location>
</feature>
<feature type="sequence conflict" description="In Ref. 3; AAC25510." evidence="10" ref="3">
    <location>
        <begin position="418"/>
        <end position="422"/>
    </location>
</feature>
<feature type="sequence conflict" description="In Ref. 1; AAG02117." evidence="10" ref="1">
    <original>P</original>
    <variation>S</variation>
    <location>
        <position position="489"/>
    </location>
</feature>
<organism>
    <name type="scientific">Arabidopsis thaliana</name>
    <name type="common">Mouse-ear cress</name>
    <dbReference type="NCBI Taxonomy" id="3702"/>
    <lineage>
        <taxon>Eukaryota</taxon>
        <taxon>Viridiplantae</taxon>
        <taxon>Streptophyta</taxon>
        <taxon>Embryophyta</taxon>
        <taxon>Tracheophyta</taxon>
        <taxon>Spermatophyta</taxon>
        <taxon>Magnoliopsida</taxon>
        <taxon>eudicotyledons</taxon>
        <taxon>Gunneridae</taxon>
        <taxon>Pentapetalae</taxon>
        <taxon>rosids</taxon>
        <taxon>malvids</taxon>
        <taxon>Brassicales</taxon>
        <taxon>Brassicaceae</taxon>
        <taxon>Camelineae</taxon>
        <taxon>Arabidopsis</taxon>
    </lineage>
</organism>
<sequence length="660" mass="72873">MAAAVATGVAPATMVDQVPSPTAQTSVQVPVSIPLPSPVVVADQTHPNSSLYAGDLDPKVTEAHLFDLFKHVANVVSVRVCRDQNRRSLGYAYINFSNPNDAYRAMEALNYTPLFDRPIRIMLSNRDPSTRLSGKGNIFIKNLDASIDNKALFETFSSFGTILSCKVAMDVTGRSKGYGFVQFEKEESAQAAIDKLNGMLMNDKQVFVGHFIRRQERARDENTPTPRFTNVYVKNLPKEIGEDELRKTFGKFGVISSAVVMRDQSGNSRCFGFVNFECTEAAASAVEKMNGISLGDDVLYVGRAQKKSEREEELRRKFEQERINRFEKSQGANLYLKNLDDSVDDEKLKEMFSEYGNVTSSKVMLNPQGMSRGFGFVAYSNPEEALRALSEMNGKMIGRKPLYIALAQRKEDRRAHLQALFSQIRAPGPMSGFHHPPGGPMPGPPQHMYVGQNGASMVPSQPIGYGFQPQFMPGMRPGSGPGNFIVPYPLQRQPQTGPRMGFRRGATNVQQHIQQQQLMHRNPSPGMRYMNGASNGRNGMDSSVPQGILPPIIPLPIDASSISHQKAPLLPISKLTSSLASASPADRTRMLGEQLYPLVERHEPLHVAKVTGMLLEMDQAEILHLMESPEALKSKVSEALDVLRLSVDPTDHDLGFSTTD</sequence>
<comment type="function">
    <text evidence="4 5 6 7">Binds the poly(A) tail of mRNA. Appears to be an important mediator of the multiple roles of the poly(A) tail in mRNA biogenesis, stability and translation. In the cytoplasm, affects both translation and mRNA decay. Inhibits the polyadenylated RNA degradation by the Rrp41p 3'--&gt;5' exonuclease in vitro. Binds with the 5'UTRs of PAB2, PAB3 and with a lower affinity with the 5'UTR of PAB5.</text>
</comment>
<comment type="subcellular location">
    <subcellularLocation>
        <location evidence="1">Cytoplasm</location>
    </subcellularLocation>
    <subcellularLocation>
        <location evidence="1">Nucleus</location>
    </subcellularLocation>
</comment>
<comment type="tissue specificity">
    <text evidence="6 8 9">Expressed predominantly in immature flowers. Detected in tapetum and pollen. Strongly expressed in immatures siliques.</text>
</comment>
<comment type="miscellaneous">
    <text>A.thaliana contains 8 PABP genes.</text>
</comment>
<comment type="similarity">
    <text evidence="10">Belongs to the polyadenylate-binding protein type-1 family.</text>
</comment>